<feature type="signal peptide" evidence="3">
    <location>
        <begin position="1"/>
        <end position="27"/>
    </location>
</feature>
<feature type="propeptide" id="PRO_0000413812" evidence="1">
    <location>
        <begin position="28"/>
        <end position="33"/>
    </location>
</feature>
<feature type="chain" id="PRO_0000413813" description="Kunitz-type U15-theraphotoxin-Hhn1k">
    <location>
        <begin position="34"/>
        <end position="88"/>
    </location>
</feature>
<feature type="domain" description="BPTI/Kunitz inhibitor" evidence="4">
    <location>
        <begin position="37"/>
        <end position="85"/>
    </location>
</feature>
<feature type="site" description="May bind Kv1" evidence="1">
    <location>
        <position position="39"/>
    </location>
</feature>
<feature type="site" description="Reactive bond for chymotrypsin" evidence="1">
    <location>
        <begin position="47"/>
        <end position="48"/>
    </location>
</feature>
<feature type="disulfide bond" evidence="4">
    <location>
        <begin position="37"/>
        <end position="85"/>
    </location>
</feature>
<feature type="disulfide bond" evidence="4">
    <location>
        <begin position="60"/>
        <end position="81"/>
    </location>
</feature>
<evidence type="ECO:0000250" key="1"/>
<evidence type="ECO:0000250" key="2">
    <source>
        <dbReference type="UniProtKB" id="P68425"/>
    </source>
</evidence>
<evidence type="ECO:0000255" key="3"/>
<evidence type="ECO:0000255" key="4">
    <source>
        <dbReference type="PROSITE-ProRule" id="PRU00031"/>
    </source>
</evidence>
<evidence type="ECO:0000305" key="5"/>
<evidence type="ECO:0000305" key="6">
    <source>
    </source>
</evidence>
<organism>
    <name type="scientific">Cyriopagopus hainanus</name>
    <name type="common">Chinese bird spider</name>
    <name type="synonym">Haplopelma hainanum</name>
    <dbReference type="NCBI Taxonomy" id="209901"/>
    <lineage>
        <taxon>Eukaryota</taxon>
        <taxon>Metazoa</taxon>
        <taxon>Ecdysozoa</taxon>
        <taxon>Arthropoda</taxon>
        <taxon>Chelicerata</taxon>
        <taxon>Arachnida</taxon>
        <taxon>Araneae</taxon>
        <taxon>Mygalomorphae</taxon>
        <taxon>Theraphosidae</taxon>
        <taxon>Haplopelma</taxon>
    </lineage>
</organism>
<comment type="function">
    <text evidence="2">Serine protease inhibitor that inhibits trypsin at a molar ratio of 1:1.</text>
</comment>
<comment type="subcellular location">
    <subcellularLocation>
        <location evidence="6">Secreted</location>
    </subcellularLocation>
</comment>
<comment type="tissue specificity">
    <text evidence="6">Expressed by the venom gland.</text>
</comment>
<comment type="similarity">
    <text evidence="5">Belongs to the venom Kunitz-type family. 03 (sub-Kunitz) subfamily.</text>
</comment>
<keyword id="KW-1015">Disulfide bond</keyword>
<keyword id="KW-0646">Protease inhibitor</keyword>
<keyword id="KW-0964">Secreted</keyword>
<keyword id="KW-0722">Serine protease inhibitor</keyword>
<keyword id="KW-0732">Signal</keyword>
<accession>P0DJ68</accession>
<name>VKT45_CYRHA</name>
<dbReference type="SMR" id="P0DJ68"/>
<dbReference type="ArachnoServer" id="AS001757">
    <property type="toxin name" value="U15-theraphotoxin-Hhn1k"/>
</dbReference>
<dbReference type="GO" id="GO:0005615">
    <property type="term" value="C:extracellular space"/>
    <property type="evidence" value="ECO:0007669"/>
    <property type="project" value="TreeGrafter"/>
</dbReference>
<dbReference type="GO" id="GO:0015459">
    <property type="term" value="F:potassium channel regulator activity"/>
    <property type="evidence" value="ECO:0007669"/>
    <property type="project" value="UniProtKB-KW"/>
</dbReference>
<dbReference type="GO" id="GO:0004867">
    <property type="term" value="F:serine-type endopeptidase inhibitor activity"/>
    <property type="evidence" value="ECO:0007669"/>
    <property type="project" value="UniProtKB-KW"/>
</dbReference>
<dbReference type="GO" id="GO:0090729">
    <property type="term" value="F:toxin activity"/>
    <property type="evidence" value="ECO:0007669"/>
    <property type="project" value="UniProtKB-KW"/>
</dbReference>
<dbReference type="GO" id="GO:0044562">
    <property type="term" value="P:envenomation resulting in negative regulation of voltage-gated potassium channel activity in another organism"/>
    <property type="evidence" value="ECO:0007669"/>
    <property type="project" value="UniProtKB-ARBA"/>
</dbReference>
<dbReference type="CDD" id="cd22598">
    <property type="entry name" value="Kunitz_huwentoxin"/>
    <property type="match status" value="1"/>
</dbReference>
<dbReference type="FunFam" id="4.10.410.10:FF:000020">
    <property type="entry name" value="Collagen, type VI, alpha 3"/>
    <property type="match status" value="1"/>
</dbReference>
<dbReference type="Gene3D" id="4.10.410.10">
    <property type="entry name" value="Pancreatic trypsin inhibitor Kunitz domain"/>
    <property type="match status" value="1"/>
</dbReference>
<dbReference type="InterPro" id="IPR002223">
    <property type="entry name" value="Kunitz_BPTI"/>
</dbReference>
<dbReference type="InterPro" id="IPR036880">
    <property type="entry name" value="Kunitz_BPTI_sf"/>
</dbReference>
<dbReference type="InterPro" id="IPR050098">
    <property type="entry name" value="TFPI/VKTCI-like"/>
</dbReference>
<dbReference type="PANTHER" id="PTHR10083">
    <property type="entry name" value="KUNITZ-TYPE PROTEASE INHIBITOR-RELATED"/>
    <property type="match status" value="1"/>
</dbReference>
<dbReference type="PANTHER" id="PTHR10083:SF328">
    <property type="entry name" value="TISSUE FACTOR PATHWAY INHIBITOR"/>
    <property type="match status" value="1"/>
</dbReference>
<dbReference type="Pfam" id="PF00014">
    <property type="entry name" value="Kunitz_BPTI"/>
    <property type="match status" value="1"/>
</dbReference>
<dbReference type="PRINTS" id="PR00759">
    <property type="entry name" value="BASICPTASE"/>
</dbReference>
<dbReference type="SMART" id="SM00131">
    <property type="entry name" value="KU"/>
    <property type="match status" value="1"/>
</dbReference>
<dbReference type="SUPFAM" id="SSF57362">
    <property type="entry name" value="BPTI-like"/>
    <property type="match status" value="1"/>
</dbReference>
<dbReference type="PROSITE" id="PS50279">
    <property type="entry name" value="BPTI_KUNITZ_2"/>
    <property type="match status" value="1"/>
</dbReference>
<proteinExistence type="inferred from homology"/>
<reference key="1">
    <citation type="journal article" date="2008" name="PLoS ONE">
        <title>Discovery of a distinct superfamily of Kunitz-type toxin (KTT) from tarantulas.</title>
        <authorList>
            <person name="Yuan C.-H."/>
            <person name="He Q.-Y."/>
            <person name="Peng K."/>
            <person name="Diao J.-B."/>
            <person name="Jiang L.-P."/>
            <person name="Tang X."/>
            <person name="Liang S.-P."/>
        </authorList>
    </citation>
    <scope>NUCLEOTIDE SEQUENCE [MRNA]</scope>
    <source>
        <tissue>Venom gland</tissue>
    </source>
</reference>
<protein>
    <recommendedName>
        <fullName>Kunitz-type U15-theraphotoxin-Hhn1k</fullName>
        <shortName>U15-TRTX-theraphotoxin-Hhn1k</shortName>
    </recommendedName>
    <alternativeName>
        <fullName>Kunitz-type serine protease inhibitor HNTX-45</fullName>
    </alternativeName>
</protein>
<sequence length="88" mass="9831">MGTARFLRAVLLLSVLLMVTFPALLSAEHHDGRVDICRLPSDSGDCLRFFEMWCFDGTTCTKFVYGGYGGNDNRFPTEKACMKRCAKA</sequence>